<name>YX07_CAEEL</name>
<proteinExistence type="predicted"/>
<accession>Q11114</accession>
<accession>E9P846</accession>
<accession>E9P847</accession>
<comment type="alternative products">
    <event type="alternative splicing"/>
    <isoform>
        <id>Q11114-1</id>
        <name>a</name>
        <sequence type="displayed"/>
    </isoform>
    <isoform>
        <id>Q11114-2</id>
        <name>b</name>
        <sequence type="described" ref="VSP_041737"/>
    </isoform>
</comment>
<evidence type="ECO:0000256" key="1">
    <source>
        <dbReference type="SAM" id="MobiDB-lite"/>
    </source>
</evidence>
<evidence type="ECO:0000305" key="2"/>
<protein>
    <recommendedName>
        <fullName>Uncharacterized protein C03B1.7</fullName>
    </recommendedName>
</protein>
<feature type="chain" id="PRO_0000065122" description="Uncharacterized protein C03B1.7">
    <location>
        <begin position="1"/>
        <end position="847"/>
    </location>
</feature>
<feature type="region of interest" description="Disordered" evidence="1">
    <location>
        <begin position="116"/>
        <end position="153"/>
    </location>
</feature>
<feature type="region of interest" description="Disordered" evidence="1">
    <location>
        <begin position="208"/>
        <end position="245"/>
    </location>
</feature>
<feature type="region of interest" description="Disordered" evidence="1">
    <location>
        <begin position="361"/>
        <end position="392"/>
    </location>
</feature>
<feature type="compositionally biased region" description="Polar residues" evidence="1">
    <location>
        <begin position="116"/>
        <end position="126"/>
    </location>
</feature>
<feature type="compositionally biased region" description="Basic and acidic residues" evidence="1">
    <location>
        <begin position="128"/>
        <end position="145"/>
    </location>
</feature>
<feature type="compositionally biased region" description="Polar residues" evidence="1">
    <location>
        <begin position="368"/>
        <end position="378"/>
    </location>
</feature>
<feature type="splice variant" id="VSP_041737" description="In isoform b." evidence="2">
    <location>
        <begin position="1"/>
        <end position="192"/>
    </location>
</feature>
<reference key="1">
    <citation type="journal article" date="1998" name="Science">
        <title>Genome sequence of the nematode C. elegans: a platform for investigating biology.</title>
        <authorList>
            <consortium name="The C. elegans sequencing consortium"/>
        </authorList>
    </citation>
    <scope>NUCLEOTIDE SEQUENCE [LARGE SCALE GENOMIC DNA]</scope>
    <scope>ALTERNATIVE SPLICING</scope>
    <source>
        <strain>Bristol N2</strain>
    </source>
</reference>
<sequence>MVISSNAFIVGRVGELDLITAGWHFLQRTMNNEDRRGFEKMISMPGFCVKKFEETYLLKRVNPFAQTEEGRIIKFNSSDCPCGKSQDVHNISAMKDQLSNFLDKWENVHEKFSLPTGSSELTTSKTPIDVDTKEQENRLKQKAEAAPKSTPIENHKKNIQALCKQNAVAEQCLWNVYHVSGKPAEKKEQRNDMDRNISGVSVKDYETLKNFEDKSPPQAENASSSKKDEPISVECTDETSSRLSPATDISHEMAEHGTPDSGMISDVSEIKVLPAGKIEKKLIKELNPEMMVGRDGRRYRQKLREAEKQATVEFKLENFEQTNGEAQSVENDILTGKEKRRLKDKLRKEKKEQSKLFVEKDLEKNKESSSASLSTNKLAESPTEADKNSNVIHTNIKPKDICIETEYPANNDNKKKSEVMFSSTVTNVFGRNENQTSFDVKEHTVDSFELLPGEYRISNFGQQMADTTSAEMTALGKMPQEAGEVKPTVREHSGANFLQRERNFPLSLKTTVIANSPEGDIEGKRLSKGQKRRARNKANKGVYVVNENGSHSIELLPGEYKLLELDENKKIQEFPIDTRHYMRDDQTGGGSKIVEQGQRTKKKKNFYVAGNLSKNILDNGKWLAYVIDDKNSDGVPRVGEVSTEEVQETIKLLDSKISHNAIQDNSCSEDFEFGSSSSTNFVTGSSRSLLPELDADFVRKTLADYEENATEDAAENNNEVFESASEELEMFMNSEGIAPNFHSEFAKKTSPLLVGNAEFKDFCSKYSNSKYDNKTISKLVKKYIDTRIVHHYERFKKLADRESHRIAKSWTKIYETSSYSLMVMLYTNSPSSSVGFSDLEEILFNDR</sequence>
<dbReference type="EMBL" id="FO080304">
    <property type="protein sequence ID" value="CCD62749.1"/>
    <property type="molecule type" value="Genomic_DNA"/>
</dbReference>
<dbReference type="EMBL" id="FO080304">
    <property type="protein sequence ID" value="CCD62750.1"/>
    <property type="molecule type" value="Genomic_DNA"/>
</dbReference>
<dbReference type="PIR" id="T15380">
    <property type="entry name" value="T15380"/>
</dbReference>
<dbReference type="RefSeq" id="NP_001257040.1">
    <molecule id="Q11114-1"/>
    <property type="nucleotide sequence ID" value="NM_001270111.4"/>
</dbReference>
<dbReference type="RefSeq" id="NP_001257041.1">
    <property type="nucleotide sequence ID" value="NM_001270112.1"/>
</dbReference>
<dbReference type="RefSeq" id="NP_001379610.1">
    <molecule id="Q11114-2"/>
    <property type="nucleotide sequence ID" value="NM_001392787.1"/>
</dbReference>
<dbReference type="SMR" id="Q11114"/>
<dbReference type="FunCoup" id="Q11114">
    <property type="interactions" value="761"/>
</dbReference>
<dbReference type="STRING" id="6239.C03B1.7a.1"/>
<dbReference type="PaxDb" id="6239-C03B1.7a"/>
<dbReference type="PeptideAtlas" id="Q11114"/>
<dbReference type="EnsemblMetazoa" id="C03B1.7a.1">
    <molecule id="Q11114-1"/>
    <property type="protein sequence ID" value="C03B1.7a.1"/>
    <property type="gene ID" value="WBGene00015378"/>
</dbReference>
<dbReference type="EnsemblMetazoa" id="C03B1.7b.1">
    <molecule id="Q11114-2"/>
    <property type="protein sequence ID" value="C03B1.7b.1"/>
    <property type="gene ID" value="WBGene00015378"/>
</dbReference>
<dbReference type="GeneID" id="182149"/>
<dbReference type="KEGG" id="cel:CELE_C03B1.7"/>
<dbReference type="UCSC" id="C03B1.7">
    <molecule id="Q11114-1"/>
    <property type="organism name" value="c. elegans"/>
</dbReference>
<dbReference type="AGR" id="WB:WBGene00015378"/>
<dbReference type="CTD" id="182149"/>
<dbReference type="WormBase" id="C03B1.7a">
    <molecule id="Q11114-1"/>
    <property type="protein sequence ID" value="CE45793"/>
    <property type="gene ID" value="WBGene00015378"/>
</dbReference>
<dbReference type="WormBase" id="C03B1.7b">
    <molecule id="Q11114-2"/>
    <property type="protein sequence ID" value="CE45734"/>
    <property type="gene ID" value="WBGene00015378"/>
</dbReference>
<dbReference type="eggNOG" id="ENOG502RT9E">
    <property type="taxonomic scope" value="Eukaryota"/>
</dbReference>
<dbReference type="HOGENOM" id="CLU_014894_0_0_1"/>
<dbReference type="InParanoid" id="Q11114"/>
<dbReference type="OMA" id="VAEQCLW"/>
<dbReference type="OrthoDB" id="5839405at2759"/>
<dbReference type="PRO" id="PR:Q11114"/>
<dbReference type="Proteomes" id="UP000001940">
    <property type="component" value="Chromosome X"/>
</dbReference>
<dbReference type="Bgee" id="WBGene00015378">
    <property type="expression patterns" value="Expressed in germ line (C elegans) and 4 other cell types or tissues"/>
</dbReference>
<dbReference type="GO" id="GO:0016020">
    <property type="term" value="C:membrane"/>
    <property type="evidence" value="ECO:0000318"/>
    <property type="project" value="GO_Central"/>
</dbReference>
<dbReference type="GO" id="GO:0015149">
    <property type="term" value="F:hexose transmembrane transporter activity"/>
    <property type="evidence" value="ECO:0000318"/>
    <property type="project" value="GO_Central"/>
</dbReference>
<dbReference type="GO" id="GO:0015749">
    <property type="term" value="P:monosaccharide transmembrane transport"/>
    <property type="evidence" value="ECO:0000318"/>
    <property type="project" value="GO_Central"/>
</dbReference>
<keyword id="KW-0025">Alternative splicing</keyword>
<keyword id="KW-1185">Reference proteome</keyword>
<gene>
    <name type="ORF">C03B1.7</name>
</gene>
<organism>
    <name type="scientific">Caenorhabditis elegans</name>
    <dbReference type="NCBI Taxonomy" id="6239"/>
    <lineage>
        <taxon>Eukaryota</taxon>
        <taxon>Metazoa</taxon>
        <taxon>Ecdysozoa</taxon>
        <taxon>Nematoda</taxon>
        <taxon>Chromadorea</taxon>
        <taxon>Rhabditida</taxon>
        <taxon>Rhabditina</taxon>
        <taxon>Rhabditomorpha</taxon>
        <taxon>Rhabditoidea</taxon>
        <taxon>Rhabditidae</taxon>
        <taxon>Peloderinae</taxon>
        <taxon>Caenorhabditis</taxon>
    </lineage>
</organism>